<feature type="chain" id="PRO_0000190777" description="XK-related protein 4">
    <location>
        <begin position="1"/>
        <end position="650"/>
    </location>
</feature>
<feature type="chain" id="PRO_0000453289" description="XK-related protein 4, processed form" evidence="1">
    <location>
        <begin position="1"/>
        <end position="567"/>
    </location>
</feature>
<feature type="transmembrane region" description="Helical" evidence="2">
    <location>
        <begin position="114"/>
        <end position="134"/>
    </location>
</feature>
<feature type="transmembrane region" description="Helical" evidence="2">
    <location>
        <begin position="144"/>
        <end position="164"/>
    </location>
</feature>
<feature type="transmembrane region" description="Helical" evidence="2">
    <location>
        <begin position="248"/>
        <end position="268"/>
    </location>
</feature>
<feature type="transmembrane region" description="Helical" evidence="2">
    <location>
        <begin position="306"/>
        <end position="326"/>
    </location>
</feature>
<feature type="transmembrane region" description="Helical" evidence="2">
    <location>
        <begin position="331"/>
        <end position="351"/>
    </location>
</feature>
<feature type="transmembrane region" description="Helical" evidence="2">
    <location>
        <begin position="365"/>
        <end position="385"/>
    </location>
</feature>
<feature type="transmembrane region" description="Helical" evidence="2">
    <location>
        <begin position="396"/>
        <end position="418"/>
    </location>
</feature>
<feature type="transmembrane region" description="Helical" evidence="2">
    <location>
        <begin position="428"/>
        <end position="448"/>
    </location>
</feature>
<feature type="transmembrane region" description="Helical" evidence="2">
    <location>
        <begin position="457"/>
        <end position="477"/>
    </location>
</feature>
<feature type="transmembrane region" description="Helical" evidence="2">
    <location>
        <begin position="487"/>
        <end position="507"/>
    </location>
</feature>
<feature type="region of interest" description="Disordered" evidence="3">
    <location>
        <begin position="1"/>
        <end position="44"/>
    </location>
</feature>
<feature type="region of interest" description="Disordered" evidence="3">
    <location>
        <begin position="200"/>
        <end position="238"/>
    </location>
</feature>
<feature type="compositionally biased region" description="Basic and acidic residues" evidence="3">
    <location>
        <begin position="1"/>
        <end position="15"/>
    </location>
</feature>
<feature type="compositionally biased region" description="Polar residues" evidence="3">
    <location>
        <begin position="21"/>
        <end position="31"/>
    </location>
</feature>
<feature type="compositionally biased region" description="Low complexity" evidence="3">
    <location>
        <begin position="216"/>
        <end position="238"/>
    </location>
</feature>
<feature type="site" description="Cleavage; by caspase-3, caspase-6 and caspase-7" evidence="1">
    <location>
        <begin position="567"/>
        <end position="568"/>
    </location>
</feature>
<feature type="modified residue" description="Phosphoserine" evidence="1">
    <location>
        <position position="200"/>
    </location>
</feature>
<evidence type="ECO:0000250" key="1">
    <source>
        <dbReference type="UniProtKB" id="Q5GH67"/>
    </source>
</evidence>
<evidence type="ECO:0000255" key="2"/>
<evidence type="ECO:0000256" key="3">
    <source>
        <dbReference type="SAM" id="MobiDB-lite"/>
    </source>
</evidence>
<evidence type="ECO:0000269" key="4">
    <source>
    </source>
</evidence>
<evidence type="ECO:0000269" key="5">
    <source>
    </source>
</evidence>
<evidence type="ECO:0000303" key="6">
    <source>
    </source>
</evidence>
<evidence type="ECO:0000303" key="7">
    <source>
    </source>
</evidence>
<evidence type="ECO:0000303" key="8">
    <source ref="1"/>
</evidence>
<evidence type="ECO:0000305" key="9"/>
<evidence type="ECO:0000305" key="10">
    <source>
    </source>
</evidence>
<evidence type="ECO:0000305" key="11">
    <source>
    </source>
</evidence>
<evidence type="ECO:0000312" key="12">
    <source>
        <dbReference type="HGNC" id="HGNC:29394"/>
    </source>
</evidence>
<sequence>MAAKSDGRLKMKKSSDVAFTPLQNSDHSGSVQGLAPGLPSGSGAEDEEAAGGGCCPDGGGCSRCCCCCAGSGGSAGSGGSGGVAGPGGGGAGSAALCLRLGREQRRYSLWDCLWILAAVAVYFADVGTDVWLAVDYYLRGQRWWFGLTLFFVVLGSLSVQVFSFRWFVHDFSTEDSATAAAASSCPQPGADCKTVVGGGSAAGEGEARPSTPQRQASNASKSNIAAANSGSNSSGATRASGKHRSASCSFCIWLLQSLIHILQLGQIWRYFHTIYLGIRSRQSGENDRWRFYWKMVYEYADVSMLHLLATFLESAPQLVLQLCIIVQTHSLQALQGFTAAASLVSLAWALASYQKALRDSRDDKKPISYMAVIIQFCWHFFTIAARVITFALFASVFQLYFGIFIVLHWCIMTFWIVHCETEFCITKWEEIVFDMVVGIIYIFSWFNVKEGRTRCRLFIYYFVILLENTALSALWYLYKAPQIADAFAIPALCVVFSSFLTGVVFMLMYYAFFHPNGPRFGQSPSCACEDPAAAFTLPPDVATSTLRSISNNRSVVSDRDQKFAERDGCVPVFQVRPTAPSTPSSRPPRIEESVIKIDLFRNRYPAWERHVLDRSLRKAILAFECSPSPPRLQYKDDALIQERLEYETTL</sequence>
<proteinExistence type="evidence at protein level"/>
<reference key="1">
    <citation type="submission" date="2004-01" db="EMBL/GenBank/DDBJ databases">
        <title>A superfamily of XK-related genes (XRG) widely expressed in vertebrates and invertebrates.</title>
        <authorList>
            <person name="Huang C.-H."/>
            <person name="Chen Y."/>
        </authorList>
    </citation>
    <scope>NUCLEOTIDE SEQUENCE [MRNA]</scope>
</reference>
<reference key="2">
    <citation type="journal article" date="2001" name="DNA Res.">
        <title>Prediction of the coding sequences of unidentified human genes. XXI. The complete sequences of 60 new cDNA clones from brain which code for large proteins.</title>
        <authorList>
            <person name="Nagase T."/>
            <person name="Kikuno R."/>
            <person name="Ohara O."/>
        </authorList>
    </citation>
    <scope>NUCLEOTIDE SEQUENCE [LARGE SCALE MRNA] OF 146-650</scope>
    <source>
        <tissue>Brain</tissue>
    </source>
</reference>
<reference key="3">
    <citation type="journal article" date="2014" name="J. Biol. Chem.">
        <title>Exposure of phosphatidylserine by Xk-related protein family members during apoptosis.</title>
        <authorList>
            <person name="Suzuki J."/>
            <person name="Imanishi E."/>
            <person name="Nagata S."/>
        </authorList>
    </citation>
    <scope>FUNCTION</scope>
    <scope>CATALYTIC ACTIVITY</scope>
</reference>
<reference key="4">
    <citation type="journal article" date="2021" name="Mol. Cell">
        <title>Caspase cleavage releases a nuclear protein fragment that stimulates phospholipid scrambling at the plasma membrane.</title>
        <authorList>
            <person name="Maruoka M."/>
            <person name="Zhang P."/>
            <person name="Mori H."/>
            <person name="Imanishi E."/>
            <person name="Packwood D.M."/>
            <person name="Harada H."/>
            <person name="Kosako H."/>
            <person name="Suzuki J."/>
        </authorList>
    </citation>
    <scope>FUNCTION</scope>
    <scope>SUBUNIT</scope>
    <scope>INTERACTION WITH XRCC4</scope>
    <scope>ACTIVITY REGULATION</scope>
</reference>
<name>XKR4_HUMAN</name>
<comment type="function">
    <molecule>XK-related protein 4, processed form</molecule>
    <text evidence="4 5">Phospholipid scramblase that promotes phosphatidylserine exposure on apoptotic cell surface (PubMed:25231987, PubMed:33725486). Phosphatidylserine is a specific marker only present at the surface of apoptotic cells and acts as a specific signal for engulfment (PubMed:25231987, PubMed:33725486).</text>
</comment>
<comment type="catalytic activity">
    <molecule>XK-related protein 4, processed form</molecule>
    <reaction evidence="10">
        <text>a 1,2-diacyl-sn-glycero-3-phospho-L-serine(in) = a 1,2-diacyl-sn-glycero-3-phospho-L-serine(out)</text>
        <dbReference type="Rhea" id="RHEA:38663"/>
        <dbReference type="ChEBI" id="CHEBI:57262"/>
    </reaction>
</comment>
<comment type="activity regulation">
    <text evidence="1">Phospholipid scramblase activity is activated upon caspase cleavage to generate the XK-related protein 4, processed form (By similarity). Does not act prior the onset of apoptosis (By similarity).</text>
</comment>
<comment type="activity regulation">
    <molecule>XK-related protein 4, processed form</molecule>
    <text evidence="1 5">Homodimerizes upon caspase cleavage (By similarity). Phospholipid scramblase activity is activated following interaction with the processed C-terminus of XRCC4 (protein XRCC4, C-terminus) (PubMed:33725486).</text>
</comment>
<comment type="subunit">
    <molecule>XK-related protein 4, processed form</molecule>
    <text evidence="5">Homodimer; homodimerization takes place upon caspase cleavage (PubMed:33725486). Interacts with the processed C-terminus of XRCC4 (protein XRCC4, C-terminus); interaction promotes the phospholipid scramblase activity (PubMed:33725486).</text>
</comment>
<comment type="subcellular location">
    <subcellularLocation>
        <location evidence="1">Cell membrane</location>
        <topology evidence="2">Multi-pass membrane protein</topology>
    </subcellularLocation>
</comment>
<comment type="PTM">
    <molecule>XK-related protein 4, processed form</molecule>
    <text evidence="1">Undergoes proteolytic processing by caspase-3 (CASP3), caspase-6 (CASP6) and caspase-7 (CASP7) to generate the XK-related protein 4, processed form, leading to its activation.</text>
</comment>
<comment type="similarity">
    <text evidence="9">Belongs to the XK family.</text>
</comment>
<gene>
    <name evidence="7 12" type="primary">XKR4</name>
    <name evidence="6" type="synonym">KIAA1889</name>
    <name evidence="8" type="synonym">XRG4</name>
</gene>
<organism>
    <name type="scientific">Homo sapiens</name>
    <name type="common">Human</name>
    <dbReference type="NCBI Taxonomy" id="9606"/>
    <lineage>
        <taxon>Eukaryota</taxon>
        <taxon>Metazoa</taxon>
        <taxon>Chordata</taxon>
        <taxon>Craniata</taxon>
        <taxon>Vertebrata</taxon>
        <taxon>Euteleostomi</taxon>
        <taxon>Mammalia</taxon>
        <taxon>Eutheria</taxon>
        <taxon>Euarchontoglires</taxon>
        <taxon>Primates</taxon>
        <taxon>Haplorrhini</taxon>
        <taxon>Catarrhini</taxon>
        <taxon>Hominidae</taxon>
        <taxon>Homo</taxon>
    </lineage>
</organism>
<protein>
    <recommendedName>
        <fullName evidence="9">XK-related protein 4</fullName>
        <shortName evidence="7">hXKR4</shortName>
    </recommendedName>
    <component>
        <recommendedName>
            <fullName evidence="11">XK-related protein 4, processed form</fullName>
        </recommendedName>
    </component>
</protein>
<keyword id="KW-0053">Apoptosis</keyword>
<keyword id="KW-1003">Cell membrane</keyword>
<keyword id="KW-0472">Membrane</keyword>
<keyword id="KW-0597">Phosphoprotein</keyword>
<keyword id="KW-1267">Proteomics identification</keyword>
<keyword id="KW-1185">Reference proteome</keyword>
<keyword id="KW-0812">Transmembrane</keyword>
<keyword id="KW-1133">Transmembrane helix</keyword>
<accession>Q5GH76</accession>
<accession>Q96PZ8</accession>
<dbReference type="EMBL" id="AY534241">
    <property type="protein sequence ID" value="AAT07090.1"/>
    <property type="molecule type" value="mRNA"/>
</dbReference>
<dbReference type="EMBL" id="AB067476">
    <property type="protein sequence ID" value="BAB67782.1"/>
    <property type="molecule type" value="mRNA"/>
</dbReference>
<dbReference type="CCDS" id="CCDS34893.1"/>
<dbReference type="RefSeq" id="NP_443130.1">
    <property type="nucleotide sequence ID" value="NM_052898.2"/>
</dbReference>
<dbReference type="SMR" id="Q5GH76"/>
<dbReference type="BioGRID" id="125348">
    <property type="interactions" value="28"/>
</dbReference>
<dbReference type="FunCoup" id="Q5GH76">
    <property type="interactions" value="682"/>
</dbReference>
<dbReference type="IntAct" id="Q5GH76">
    <property type="interactions" value="9"/>
</dbReference>
<dbReference type="STRING" id="9606.ENSP00000328326"/>
<dbReference type="TCDB" id="2.A.112.1.11">
    <property type="family name" value="the kx blood-group antigen (kxa) family"/>
</dbReference>
<dbReference type="GlyGen" id="Q5GH76">
    <property type="glycosylation" value="1 site"/>
</dbReference>
<dbReference type="iPTMnet" id="Q5GH76"/>
<dbReference type="PhosphoSitePlus" id="Q5GH76"/>
<dbReference type="SwissPalm" id="Q5GH76"/>
<dbReference type="BioMuta" id="XKR4"/>
<dbReference type="DMDM" id="74707818"/>
<dbReference type="jPOST" id="Q5GH76"/>
<dbReference type="MassIVE" id="Q5GH76"/>
<dbReference type="PaxDb" id="9606-ENSP00000328326"/>
<dbReference type="PeptideAtlas" id="Q5GH76"/>
<dbReference type="ProteomicsDB" id="62834"/>
<dbReference type="Antibodypedia" id="11703">
    <property type="antibodies" value="84 antibodies from 17 providers"/>
</dbReference>
<dbReference type="DNASU" id="114786"/>
<dbReference type="Ensembl" id="ENST00000327381.7">
    <property type="protein sequence ID" value="ENSP00000328326.5"/>
    <property type="gene ID" value="ENSG00000206579.10"/>
</dbReference>
<dbReference type="GeneID" id="114786"/>
<dbReference type="KEGG" id="hsa:114786"/>
<dbReference type="MANE-Select" id="ENST00000327381.7">
    <property type="protein sequence ID" value="ENSP00000328326.5"/>
    <property type="RefSeq nucleotide sequence ID" value="NM_052898.2"/>
    <property type="RefSeq protein sequence ID" value="NP_443130.1"/>
</dbReference>
<dbReference type="UCSC" id="uc003xsf.4">
    <property type="organism name" value="human"/>
</dbReference>
<dbReference type="AGR" id="HGNC:29394"/>
<dbReference type="CTD" id="114786"/>
<dbReference type="DisGeNET" id="114786"/>
<dbReference type="GeneCards" id="XKR4"/>
<dbReference type="HGNC" id="HGNC:29394">
    <property type="gene designation" value="XKR4"/>
</dbReference>
<dbReference type="HPA" id="ENSG00000206579">
    <property type="expression patterns" value="Tissue enhanced (brain, intestine)"/>
</dbReference>
<dbReference type="neXtProt" id="NX_Q5GH76"/>
<dbReference type="OpenTargets" id="ENSG00000206579"/>
<dbReference type="PharmGKB" id="PA142670563"/>
<dbReference type="VEuPathDB" id="HostDB:ENSG00000206579"/>
<dbReference type="eggNOG" id="KOG4790">
    <property type="taxonomic scope" value="Eukaryota"/>
</dbReference>
<dbReference type="GeneTree" id="ENSGT01110000267146"/>
<dbReference type="HOGENOM" id="CLU_028534_1_0_1"/>
<dbReference type="InParanoid" id="Q5GH76"/>
<dbReference type="OMA" id="CQQPGAD"/>
<dbReference type="OrthoDB" id="6356248at2759"/>
<dbReference type="PAN-GO" id="Q5GH76">
    <property type="GO annotations" value="4 GO annotations based on evolutionary models"/>
</dbReference>
<dbReference type="PhylomeDB" id="Q5GH76"/>
<dbReference type="TreeFam" id="TF316454"/>
<dbReference type="PathwayCommons" id="Q5GH76"/>
<dbReference type="SignaLink" id="Q5GH76"/>
<dbReference type="BioGRID-ORCS" id="114786">
    <property type="hits" value="9 hits in 1137 CRISPR screens"/>
</dbReference>
<dbReference type="ChiTaRS" id="XKR4">
    <property type="organism name" value="human"/>
</dbReference>
<dbReference type="GenomeRNAi" id="114786"/>
<dbReference type="Pharos" id="Q5GH76">
    <property type="development level" value="Tbio"/>
</dbReference>
<dbReference type="PRO" id="PR:Q5GH76"/>
<dbReference type="Proteomes" id="UP000005640">
    <property type="component" value="Chromosome 8"/>
</dbReference>
<dbReference type="RNAct" id="Q5GH76">
    <property type="molecule type" value="protein"/>
</dbReference>
<dbReference type="Bgee" id="ENSG00000206579">
    <property type="expression patterns" value="Expressed in lateral nuclear group of thalamus and 129 other cell types or tissues"/>
</dbReference>
<dbReference type="GO" id="GO:0005886">
    <property type="term" value="C:plasma membrane"/>
    <property type="evidence" value="ECO:0000250"/>
    <property type="project" value="UniProtKB"/>
</dbReference>
<dbReference type="GO" id="GO:1902742">
    <property type="term" value="P:apoptotic process involved in development"/>
    <property type="evidence" value="ECO:0000318"/>
    <property type="project" value="GO_Central"/>
</dbReference>
<dbReference type="GO" id="GO:0043652">
    <property type="term" value="P:engulfment of apoptotic cell"/>
    <property type="evidence" value="ECO:0000318"/>
    <property type="project" value="GO_Central"/>
</dbReference>
<dbReference type="GO" id="GO:0070782">
    <property type="term" value="P:phosphatidylserine exposure on apoptotic cell surface"/>
    <property type="evidence" value="ECO:0000318"/>
    <property type="project" value="GO_Central"/>
</dbReference>
<dbReference type="InterPro" id="IPR018629">
    <property type="entry name" value="XK-rel"/>
</dbReference>
<dbReference type="InterPro" id="IPR050895">
    <property type="entry name" value="XK-related_scramblase"/>
</dbReference>
<dbReference type="PANTHER" id="PTHR16024">
    <property type="entry name" value="XK-RELATED PROTEIN"/>
    <property type="match status" value="1"/>
</dbReference>
<dbReference type="PANTHER" id="PTHR16024:SF16">
    <property type="entry name" value="XK-RELATED PROTEIN 4"/>
    <property type="match status" value="1"/>
</dbReference>
<dbReference type="Pfam" id="PF09815">
    <property type="entry name" value="XK-related"/>
    <property type="match status" value="1"/>
</dbReference>